<name>TAF1D_MOUSE</name>
<proteinExistence type="evidence at protein level"/>
<protein>
    <recommendedName>
        <fullName>TATA box-binding protein-associated factor RNA polymerase I subunit D</fullName>
    </recommendedName>
    <alternativeName>
        <fullName>TATA box-binding protein-associated factor 1D</fullName>
        <shortName>TBP-associated factor 1D</shortName>
    </alternativeName>
    <alternativeName>
        <fullName>Transcription initiation factor SL1/TIF-IB subunit D</fullName>
    </alternativeName>
</protein>
<keyword id="KW-0025">Alternative splicing</keyword>
<keyword id="KW-0238">DNA-binding</keyword>
<keyword id="KW-0539">Nucleus</keyword>
<keyword id="KW-0597">Phosphoprotein</keyword>
<keyword id="KW-1185">Reference proteome</keyword>
<keyword id="KW-0804">Transcription</keyword>
<keyword id="KW-0805">Transcription regulation</keyword>
<dbReference type="EMBL" id="AK050165">
    <property type="protein sequence ID" value="BAC34104.1"/>
    <property type="molecule type" value="mRNA"/>
</dbReference>
<dbReference type="EMBL" id="AK012662">
    <property type="protein sequence ID" value="BAB28391.1"/>
    <property type="molecule type" value="mRNA"/>
</dbReference>
<dbReference type="EMBL" id="AK014920">
    <property type="protein sequence ID" value="BAB29621.1"/>
    <property type="molecule type" value="mRNA"/>
</dbReference>
<dbReference type="EMBL" id="AK016109">
    <property type="protein sequence ID" value="BAB30118.1"/>
    <property type="molecule type" value="mRNA"/>
</dbReference>
<dbReference type="EMBL" id="AK166329">
    <property type="protein sequence ID" value="BAE38709.1"/>
    <property type="molecule type" value="mRNA"/>
</dbReference>
<dbReference type="EMBL" id="BC110660">
    <property type="protein sequence ID" value="AAI10661.1"/>
    <property type="molecule type" value="mRNA"/>
</dbReference>
<dbReference type="EMBL" id="BC117068">
    <property type="protein sequence ID" value="AAI17069.1"/>
    <property type="molecule type" value="mRNA"/>
</dbReference>
<dbReference type="EMBL" id="BC117070">
    <property type="protein sequence ID" value="AAI17071.1"/>
    <property type="molecule type" value="mRNA"/>
</dbReference>
<dbReference type="CCDS" id="CCDS22836.1">
    <molecule id="Q9D4V4-1"/>
</dbReference>
<dbReference type="CCDS" id="CCDS52726.1">
    <molecule id="Q9D4V4-2"/>
</dbReference>
<dbReference type="RefSeq" id="NP_081537.1">
    <molecule id="Q9D4V4-2"/>
    <property type="nucleotide sequence ID" value="NM_027261.3"/>
</dbReference>
<dbReference type="RefSeq" id="NP_083524.2">
    <molecule id="Q9D4V4-1"/>
    <property type="nucleotide sequence ID" value="NM_029248.2"/>
</dbReference>
<dbReference type="RefSeq" id="XP_006510726.1">
    <property type="nucleotide sequence ID" value="XM_006510663.2"/>
</dbReference>
<dbReference type="RefSeq" id="XP_011240922.1">
    <molecule id="Q9D4V4-1"/>
    <property type="nucleotide sequence ID" value="XM_011242620.3"/>
</dbReference>
<dbReference type="SMR" id="Q9D4V4"/>
<dbReference type="BioGRID" id="217388">
    <property type="interactions" value="1"/>
</dbReference>
<dbReference type="FunCoup" id="Q9D4V4">
    <property type="interactions" value="1736"/>
</dbReference>
<dbReference type="STRING" id="10090.ENSMUSP00000034415"/>
<dbReference type="iPTMnet" id="Q9D4V4"/>
<dbReference type="PhosphoSitePlus" id="Q9D4V4"/>
<dbReference type="PaxDb" id="10090-ENSMUSP00000034415"/>
<dbReference type="PeptideAtlas" id="Q9D4V4"/>
<dbReference type="ProteomicsDB" id="254493">
    <molecule id="Q9D4V4-1"/>
</dbReference>
<dbReference type="ProteomicsDB" id="254494">
    <molecule id="Q9D4V4-2"/>
</dbReference>
<dbReference type="ProteomicsDB" id="254495">
    <molecule id="Q9D4V4-3"/>
</dbReference>
<dbReference type="Pumba" id="Q9D4V4"/>
<dbReference type="Antibodypedia" id="53987">
    <property type="antibodies" value="63 antibodies from 11 providers"/>
</dbReference>
<dbReference type="Ensembl" id="ENSMUST00000034415.6">
    <molecule id="Q9D4V4-1"/>
    <property type="protein sequence ID" value="ENSMUSP00000034415.6"/>
    <property type="gene ID" value="ENSMUSG00000031939.17"/>
</dbReference>
<dbReference type="Ensembl" id="ENSMUST00000164079.9">
    <molecule id="Q9D4V4-2"/>
    <property type="protein sequence ID" value="ENSMUSP00000129141.2"/>
    <property type="gene ID" value="ENSMUSG00000031939.17"/>
</dbReference>
<dbReference type="Ensembl" id="ENSMUST00000213763.2">
    <molecule id="Q9D4V4-3"/>
    <property type="protein sequence ID" value="ENSMUSP00000150356.2"/>
    <property type="gene ID" value="ENSMUSG00000031939.17"/>
</dbReference>
<dbReference type="Ensembl" id="ENSMUST00000214054.2">
    <molecule id="Q9D4V4-3"/>
    <property type="protein sequence ID" value="ENSMUSP00000150937.2"/>
    <property type="gene ID" value="ENSMUSG00000031939.17"/>
</dbReference>
<dbReference type="Ensembl" id="ENSMUST00000216825.2">
    <molecule id="Q9D4V4-3"/>
    <property type="protein sequence ID" value="ENSMUSP00000149377.2"/>
    <property type="gene ID" value="ENSMUSG00000031939.17"/>
</dbReference>
<dbReference type="GeneID" id="75316"/>
<dbReference type="KEGG" id="mmu:75316"/>
<dbReference type="UCSC" id="uc009ofp.2">
    <molecule id="Q9D4V4-1"/>
    <property type="organism name" value="mouse"/>
</dbReference>
<dbReference type="UCSC" id="uc009ofq.2">
    <molecule id="Q9D4V4-2"/>
    <property type="organism name" value="mouse"/>
</dbReference>
<dbReference type="AGR" id="MGI:1922566"/>
<dbReference type="CTD" id="79101"/>
<dbReference type="MGI" id="MGI:1922566">
    <property type="gene designation" value="Taf1d"/>
</dbReference>
<dbReference type="VEuPathDB" id="HostDB:ENSMUSG00000031939"/>
<dbReference type="eggNOG" id="ENOG502SQMW">
    <property type="taxonomic scope" value="Eukaryota"/>
</dbReference>
<dbReference type="GeneTree" id="ENSGT00390000009061"/>
<dbReference type="HOGENOM" id="CLU_071614_1_0_1"/>
<dbReference type="InParanoid" id="Q9D4V4"/>
<dbReference type="OMA" id="ESRKHKY"/>
<dbReference type="OrthoDB" id="9950926at2759"/>
<dbReference type="PhylomeDB" id="Q9D4V4"/>
<dbReference type="TreeFam" id="TF335756"/>
<dbReference type="Reactome" id="R-MMU-5250924">
    <property type="pathway name" value="B-WICH complex positively regulates rRNA expression"/>
</dbReference>
<dbReference type="Reactome" id="R-MMU-73762">
    <property type="pathway name" value="RNA Polymerase I Transcription Initiation"/>
</dbReference>
<dbReference type="Reactome" id="R-MMU-73772">
    <property type="pathway name" value="RNA Polymerase I Promoter Escape"/>
</dbReference>
<dbReference type="Reactome" id="R-MMU-73863">
    <property type="pathway name" value="RNA Polymerase I Transcription Termination"/>
</dbReference>
<dbReference type="BioGRID-ORCS" id="75316">
    <property type="hits" value="19 hits in 82 CRISPR screens"/>
</dbReference>
<dbReference type="ChiTaRS" id="Taf1d">
    <property type="organism name" value="mouse"/>
</dbReference>
<dbReference type="PRO" id="PR:Q9D4V4"/>
<dbReference type="Proteomes" id="UP000000589">
    <property type="component" value="Chromosome 9"/>
</dbReference>
<dbReference type="RNAct" id="Q9D4V4">
    <property type="molecule type" value="protein"/>
</dbReference>
<dbReference type="Bgee" id="ENSMUSG00000031939">
    <property type="expression patterns" value="Expressed in ileal epithelium and 274 other cell types or tissues"/>
</dbReference>
<dbReference type="ExpressionAtlas" id="Q9D4V4">
    <property type="expression patterns" value="baseline and differential"/>
</dbReference>
<dbReference type="GO" id="GO:0005654">
    <property type="term" value="C:nucleoplasm"/>
    <property type="evidence" value="ECO:0000304"/>
    <property type="project" value="Reactome"/>
</dbReference>
<dbReference type="GO" id="GO:0005668">
    <property type="term" value="C:RNA polymerase transcription factor SL1 complex"/>
    <property type="evidence" value="ECO:0007669"/>
    <property type="project" value="InterPro"/>
</dbReference>
<dbReference type="GO" id="GO:0003677">
    <property type="term" value="F:DNA binding"/>
    <property type="evidence" value="ECO:0007669"/>
    <property type="project" value="UniProtKB-KW"/>
</dbReference>
<dbReference type="GO" id="GO:0006355">
    <property type="term" value="P:regulation of DNA-templated transcription"/>
    <property type="evidence" value="ECO:0007669"/>
    <property type="project" value="InterPro"/>
</dbReference>
<dbReference type="InterPro" id="IPR027976">
    <property type="entry name" value="TAF1D"/>
</dbReference>
<dbReference type="PANTHER" id="PTHR14562">
    <property type="entry name" value="TATA BOX-BINDING PROTEIN ASSOCIATED FACTOR RNA POLYMERASE I SUBUNIT D"/>
    <property type="match status" value="1"/>
</dbReference>
<dbReference type="PANTHER" id="PTHR14562:SF3">
    <property type="entry name" value="TATA BOX-BINDING PROTEIN-ASSOCIATED FACTOR RNA POLYMERASE I SUBUNIT D"/>
    <property type="match status" value="1"/>
</dbReference>
<dbReference type="Pfam" id="PF15333">
    <property type="entry name" value="TAF1D"/>
    <property type="match status" value="1"/>
</dbReference>
<evidence type="ECO:0000250" key="1"/>
<evidence type="ECO:0000250" key="2">
    <source>
        <dbReference type="UniProtKB" id="Q9H5J8"/>
    </source>
</evidence>
<evidence type="ECO:0000256" key="3">
    <source>
        <dbReference type="SAM" id="MobiDB-lite"/>
    </source>
</evidence>
<evidence type="ECO:0000303" key="4">
    <source>
    </source>
</evidence>
<evidence type="ECO:0000303" key="5">
    <source>
    </source>
</evidence>
<evidence type="ECO:0000305" key="6"/>
<reference key="1">
    <citation type="journal article" date="2005" name="Science">
        <title>The transcriptional landscape of the mammalian genome.</title>
        <authorList>
            <person name="Carninci P."/>
            <person name="Kasukawa T."/>
            <person name="Katayama S."/>
            <person name="Gough J."/>
            <person name="Frith M.C."/>
            <person name="Maeda N."/>
            <person name="Oyama R."/>
            <person name="Ravasi T."/>
            <person name="Lenhard B."/>
            <person name="Wells C."/>
            <person name="Kodzius R."/>
            <person name="Shimokawa K."/>
            <person name="Bajic V.B."/>
            <person name="Brenner S.E."/>
            <person name="Batalov S."/>
            <person name="Forrest A.R."/>
            <person name="Zavolan M."/>
            <person name="Davis M.J."/>
            <person name="Wilming L.G."/>
            <person name="Aidinis V."/>
            <person name="Allen J.E."/>
            <person name="Ambesi-Impiombato A."/>
            <person name="Apweiler R."/>
            <person name="Aturaliya R.N."/>
            <person name="Bailey T.L."/>
            <person name="Bansal M."/>
            <person name="Baxter L."/>
            <person name="Beisel K.W."/>
            <person name="Bersano T."/>
            <person name="Bono H."/>
            <person name="Chalk A.M."/>
            <person name="Chiu K.P."/>
            <person name="Choudhary V."/>
            <person name="Christoffels A."/>
            <person name="Clutterbuck D.R."/>
            <person name="Crowe M.L."/>
            <person name="Dalla E."/>
            <person name="Dalrymple B.P."/>
            <person name="de Bono B."/>
            <person name="Della Gatta G."/>
            <person name="di Bernardo D."/>
            <person name="Down T."/>
            <person name="Engstrom P."/>
            <person name="Fagiolini M."/>
            <person name="Faulkner G."/>
            <person name="Fletcher C.F."/>
            <person name="Fukushima T."/>
            <person name="Furuno M."/>
            <person name="Futaki S."/>
            <person name="Gariboldi M."/>
            <person name="Georgii-Hemming P."/>
            <person name="Gingeras T.R."/>
            <person name="Gojobori T."/>
            <person name="Green R.E."/>
            <person name="Gustincich S."/>
            <person name="Harbers M."/>
            <person name="Hayashi Y."/>
            <person name="Hensch T.K."/>
            <person name="Hirokawa N."/>
            <person name="Hill D."/>
            <person name="Huminiecki L."/>
            <person name="Iacono M."/>
            <person name="Ikeo K."/>
            <person name="Iwama A."/>
            <person name="Ishikawa T."/>
            <person name="Jakt M."/>
            <person name="Kanapin A."/>
            <person name="Katoh M."/>
            <person name="Kawasawa Y."/>
            <person name="Kelso J."/>
            <person name="Kitamura H."/>
            <person name="Kitano H."/>
            <person name="Kollias G."/>
            <person name="Krishnan S.P."/>
            <person name="Kruger A."/>
            <person name="Kummerfeld S.K."/>
            <person name="Kurochkin I.V."/>
            <person name="Lareau L.F."/>
            <person name="Lazarevic D."/>
            <person name="Lipovich L."/>
            <person name="Liu J."/>
            <person name="Liuni S."/>
            <person name="McWilliam S."/>
            <person name="Madan Babu M."/>
            <person name="Madera M."/>
            <person name="Marchionni L."/>
            <person name="Matsuda H."/>
            <person name="Matsuzawa S."/>
            <person name="Miki H."/>
            <person name="Mignone F."/>
            <person name="Miyake S."/>
            <person name="Morris K."/>
            <person name="Mottagui-Tabar S."/>
            <person name="Mulder N."/>
            <person name="Nakano N."/>
            <person name="Nakauchi H."/>
            <person name="Ng P."/>
            <person name="Nilsson R."/>
            <person name="Nishiguchi S."/>
            <person name="Nishikawa S."/>
            <person name="Nori F."/>
            <person name="Ohara O."/>
            <person name="Okazaki Y."/>
            <person name="Orlando V."/>
            <person name="Pang K.C."/>
            <person name="Pavan W.J."/>
            <person name="Pavesi G."/>
            <person name="Pesole G."/>
            <person name="Petrovsky N."/>
            <person name="Piazza S."/>
            <person name="Reed J."/>
            <person name="Reid J.F."/>
            <person name="Ring B.Z."/>
            <person name="Ringwald M."/>
            <person name="Rost B."/>
            <person name="Ruan Y."/>
            <person name="Salzberg S.L."/>
            <person name="Sandelin A."/>
            <person name="Schneider C."/>
            <person name="Schoenbach C."/>
            <person name="Sekiguchi K."/>
            <person name="Semple C.A."/>
            <person name="Seno S."/>
            <person name="Sessa L."/>
            <person name="Sheng Y."/>
            <person name="Shibata Y."/>
            <person name="Shimada H."/>
            <person name="Shimada K."/>
            <person name="Silva D."/>
            <person name="Sinclair B."/>
            <person name="Sperling S."/>
            <person name="Stupka E."/>
            <person name="Sugiura K."/>
            <person name="Sultana R."/>
            <person name="Takenaka Y."/>
            <person name="Taki K."/>
            <person name="Tammoja K."/>
            <person name="Tan S.L."/>
            <person name="Tang S."/>
            <person name="Taylor M.S."/>
            <person name="Tegner J."/>
            <person name="Teichmann S.A."/>
            <person name="Ueda H.R."/>
            <person name="van Nimwegen E."/>
            <person name="Verardo R."/>
            <person name="Wei C.L."/>
            <person name="Yagi K."/>
            <person name="Yamanishi H."/>
            <person name="Zabarovsky E."/>
            <person name="Zhu S."/>
            <person name="Zimmer A."/>
            <person name="Hide W."/>
            <person name="Bult C."/>
            <person name="Grimmond S.M."/>
            <person name="Teasdale R.D."/>
            <person name="Liu E.T."/>
            <person name="Brusic V."/>
            <person name="Quackenbush J."/>
            <person name="Wahlestedt C."/>
            <person name="Mattick J.S."/>
            <person name="Hume D.A."/>
            <person name="Kai C."/>
            <person name="Sasaki D."/>
            <person name="Tomaru Y."/>
            <person name="Fukuda S."/>
            <person name="Kanamori-Katayama M."/>
            <person name="Suzuki M."/>
            <person name="Aoki J."/>
            <person name="Arakawa T."/>
            <person name="Iida J."/>
            <person name="Imamura K."/>
            <person name="Itoh M."/>
            <person name="Kato T."/>
            <person name="Kawaji H."/>
            <person name="Kawagashira N."/>
            <person name="Kawashima T."/>
            <person name="Kojima M."/>
            <person name="Kondo S."/>
            <person name="Konno H."/>
            <person name="Nakano K."/>
            <person name="Ninomiya N."/>
            <person name="Nishio T."/>
            <person name="Okada M."/>
            <person name="Plessy C."/>
            <person name="Shibata K."/>
            <person name="Shiraki T."/>
            <person name="Suzuki S."/>
            <person name="Tagami M."/>
            <person name="Waki K."/>
            <person name="Watahiki A."/>
            <person name="Okamura-Oho Y."/>
            <person name="Suzuki H."/>
            <person name="Kawai J."/>
            <person name="Hayashizaki Y."/>
        </authorList>
    </citation>
    <scope>NUCLEOTIDE SEQUENCE [LARGE SCALE MRNA] (ISOFORMS 1; 2 AND 3)</scope>
    <source>
        <strain>C57BL/6J</strain>
        <tissue>Liver</tissue>
        <tissue>Mammary gland</tissue>
        <tissue>Testis</tissue>
    </source>
</reference>
<reference key="2">
    <citation type="journal article" date="2004" name="Genome Res.">
        <title>The status, quality, and expansion of the NIH full-length cDNA project: the Mammalian Gene Collection (MGC).</title>
        <authorList>
            <consortium name="The MGC Project Team"/>
        </authorList>
    </citation>
    <scope>NUCLEOTIDE SEQUENCE [LARGE SCALE MRNA] (ISOFORMS 1 AND 3)</scope>
    <source>
        <strain>FVB/N</strain>
        <tissue>Brain</tissue>
        <tissue>Mammary tumor</tissue>
    </source>
</reference>
<reference key="3">
    <citation type="journal article" date="2010" name="Cell">
        <title>A tissue-specific atlas of mouse protein phosphorylation and expression.</title>
        <authorList>
            <person name="Huttlin E.L."/>
            <person name="Jedrychowski M.P."/>
            <person name="Elias J.E."/>
            <person name="Goswami T."/>
            <person name="Rad R."/>
            <person name="Beausoleil S.A."/>
            <person name="Villen J."/>
            <person name="Haas W."/>
            <person name="Sowa M.E."/>
            <person name="Gygi S.P."/>
        </authorList>
    </citation>
    <scope>IDENTIFICATION BY MASS SPECTROMETRY [LARGE SCALE ANALYSIS]</scope>
    <source>
        <tissue>Spleen</tissue>
    </source>
</reference>
<sequence>MAQSEVNSVCVASDRAGDTGDQSDDSSDGSLFKTQCAPSPIQKQRHPTVKRVTLPASVETDSSSDSSIEPRPLTLKAIFERFKKKKRKKRKKRKYEPKLRPRGRPRGKPSGTRITRRSQIDAKQIKDKGAVFPFLESESGRKPLPWKKILTYEQAVARGFFHHIEKLKYEHHLKECLKQMHAGEDLEKEDLDSRRHKYMDDDGSLSPIEEPLTEDEATNPQAECDIKLVEDSCFIISSEFSRKRNLEQEKIKKESTFSKKAKDATHREKGHRRTLKGNEHVTIEEDSRPQPRPFAHLQSKVMKKGELEYLEVHHLCGLSQPL</sequence>
<comment type="function">
    <text evidence="1">Component of the transcription factor SL1/TIF-IB complex, which is involved in the assembly of the PIC (preinitiation complex) during RNA polymerase I-dependent transcription. The rate of PIC formation probably is primarily dependent on the rate of association of SL1/TIF-IB with the rDNA promoter. SL1/TIF-IB is involved in stabilization of nucleolar transcription factor 1/UBTF on rDNA. Formation of SL1/TIF-IB excludes the association of TBP with TFIID subunits (By similarity).</text>
</comment>
<comment type="subunit">
    <text evidence="1">Component of the transcription factor SL1/TIF-IB complex, composed of TBP and at least TAF1A, TAF1B, TAF1C and TAF1D. Interacts with UBTF (By similarity).</text>
</comment>
<comment type="subcellular location">
    <subcellularLocation>
        <location evidence="1">Nucleus</location>
    </subcellularLocation>
</comment>
<comment type="alternative products">
    <event type="alternative splicing"/>
    <isoform>
        <id>Q9D4V4-1</id>
        <name>1</name>
        <sequence type="displayed"/>
    </isoform>
    <isoform>
        <id>Q9D4V4-2</id>
        <name>2</name>
        <sequence type="described" ref="VSP_020729"/>
    </isoform>
    <isoform>
        <id>Q9D4V4-3</id>
        <name>3</name>
        <sequence type="described" ref="VSP_020730"/>
    </isoform>
</comment>
<feature type="chain" id="PRO_0000250718" description="TATA box-binding protein-associated factor RNA polymerase I subunit D">
    <location>
        <begin position="1"/>
        <end position="322"/>
    </location>
</feature>
<feature type="region of interest" description="Disordered" evidence="3">
    <location>
        <begin position="1"/>
        <end position="70"/>
    </location>
</feature>
<feature type="region of interest" description="Disordered" evidence="3">
    <location>
        <begin position="82"/>
        <end position="116"/>
    </location>
</feature>
<feature type="region of interest" description="Disordered" evidence="3">
    <location>
        <begin position="198"/>
        <end position="219"/>
    </location>
</feature>
<feature type="region of interest" description="Disordered" evidence="3">
    <location>
        <begin position="257"/>
        <end position="276"/>
    </location>
</feature>
<feature type="compositionally biased region" description="Basic residues" evidence="3">
    <location>
        <begin position="82"/>
        <end position="107"/>
    </location>
</feature>
<feature type="compositionally biased region" description="Basic and acidic residues" evidence="3">
    <location>
        <begin position="257"/>
        <end position="267"/>
    </location>
</feature>
<feature type="modified residue" description="Phosphoserine" evidence="2">
    <location>
        <position position="23"/>
    </location>
</feature>
<feature type="modified residue" description="Phosphoserine" evidence="2">
    <location>
        <position position="137"/>
    </location>
</feature>
<feature type="modified residue" description="Phosphoserine" evidence="2">
    <location>
        <position position="232"/>
    </location>
</feature>
<feature type="splice variant" id="VSP_020729" description="In isoform 2." evidence="5">
    <original>DSRPQPRPFAHLQSKVMKKGELEYLEVHHLCGLSQPL</original>
    <variation>GKEHR</variation>
    <location>
        <begin position="286"/>
        <end position="322"/>
    </location>
</feature>
<feature type="splice variant" id="VSP_020730" description="In isoform 3." evidence="4 5">
    <original>DSRPQPRPFAHLQSKVMKKGELEYLEVHHLCGLSQPL</original>
    <variation>GLS</variation>
    <location>
        <begin position="286"/>
        <end position="322"/>
    </location>
</feature>
<feature type="sequence conflict" description="In Ref. 1; BAB29621." evidence="6" ref="1">
    <original>S</original>
    <variation>F</variation>
    <location>
        <position position="8"/>
    </location>
</feature>
<feature type="sequence conflict" description="In Ref. 1; BAB29621." evidence="6" ref="1">
    <original>K</original>
    <variation>R</variation>
    <location>
        <position position="148"/>
    </location>
</feature>
<feature type="sequence conflict" description="In Ref. 1; BAB29621." evidence="6" ref="1">
    <original>L</original>
    <variation>P</variation>
    <location>
        <position position="173"/>
    </location>
</feature>
<feature type="sequence conflict" description="In Ref. 1; BAB30118." evidence="6" ref="1">
    <original>K</original>
    <variation>E</variation>
    <location>
        <position position="276"/>
    </location>
</feature>
<gene>
    <name type="primary">Taf1d</name>
    <name type="synonym">Josd3</name>
</gene>
<organism>
    <name type="scientific">Mus musculus</name>
    <name type="common">Mouse</name>
    <dbReference type="NCBI Taxonomy" id="10090"/>
    <lineage>
        <taxon>Eukaryota</taxon>
        <taxon>Metazoa</taxon>
        <taxon>Chordata</taxon>
        <taxon>Craniata</taxon>
        <taxon>Vertebrata</taxon>
        <taxon>Euteleostomi</taxon>
        <taxon>Mammalia</taxon>
        <taxon>Eutheria</taxon>
        <taxon>Euarchontoglires</taxon>
        <taxon>Glires</taxon>
        <taxon>Rodentia</taxon>
        <taxon>Myomorpha</taxon>
        <taxon>Muroidea</taxon>
        <taxon>Muridae</taxon>
        <taxon>Murinae</taxon>
        <taxon>Mus</taxon>
        <taxon>Mus</taxon>
    </lineage>
</organism>
<accession>Q9D4V4</accession>
<accession>Q149X7</accession>
<accession>Q8C7I5</accession>
<accession>Q9CZG0</accession>
<accession>Q9D5U6</accession>